<gene>
    <name type="primary">stat3.2</name>
    <name type="synonym">stat3-a</name>
</gene>
<protein>
    <recommendedName>
        <fullName>Signal transducer and activator of transcription 3.2</fullName>
    </recommendedName>
    <alternativeName>
        <fullName evidence="6">Protein Stat3-A</fullName>
    </alternativeName>
</protein>
<reference evidence="6" key="1">
    <citation type="submission" date="2003-01" db="EMBL/GenBank/DDBJ databases">
        <authorList>
            <consortium name="NIH - Xenopus Gene Collection (XGC) project"/>
        </authorList>
    </citation>
    <scope>NUCLEOTIDE SEQUENCE [LARGE SCALE MRNA]</scope>
    <source>
        <tissue evidence="6">Tail bud</tissue>
    </source>
</reference>
<evidence type="ECO:0000250" key="1"/>
<evidence type="ECO:0000250" key="2">
    <source>
        <dbReference type="UniProtKB" id="P40763"/>
    </source>
</evidence>
<evidence type="ECO:0000250" key="3">
    <source>
        <dbReference type="UniProtKB" id="Q9PVX8"/>
    </source>
</evidence>
<evidence type="ECO:0000255" key="4"/>
<evidence type="ECO:0000255" key="5">
    <source>
        <dbReference type="PROSITE-ProRule" id="PRU00191"/>
    </source>
</evidence>
<evidence type="ECO:0000312" key="6">
    <source>
        <dbReference type="EMBL" id="AAH44717.1"/>
    </source>
</evidence>
<accession>Q7ZXK3</accession>
<organism>
    <name type="scientific">Xenopus laevis</name>
    <name type="common">African clawed frog</name>
    <dbReference type="NCBI Taxonomy" id="8355"/>
    <lineage>
        <taxon>Eukaryota</taxon>
        <taxon>Metazoa</taxon>
        <taxon>Chordata</taxon>
        <taxon>Craniata</taxon>
        <taxon>Vertebrata</taxon>
        <taxon>Euteleostomi</taxon>
        <taxon>Amphibia</taxon>
        <taxon>Batrachia</taxon>
        <taxon>Anura</taxon>
        <taxon>Pipoidea</taxon>
        <taxon>Pipidae</taxon>
        <taxon>Xenopodinae</taxon>
        <taxon>Xenopus</taxon>
        <taxon>Xenopus</taxon>
    </lineage>
</organism>
<sequence length="766" mass="87599">MAQWNQLQQLDTRYLEQLHQLYSDSFPMELRQFLAPWIESQDWAFAASKESHATLVFHNLLGEIDQQYSRFLQESNVLYQHNLRRIKQFLQSTYLEKPMEIARIVARCLWEEGRLLQTAVAAAQQGGPASHPNAAVITEKQQMLEQHLQDVRKKVQDLEQKMKVVENLQDDFDFNYKTLKSQSDLSELNGNNQSVTRQKMQQLEQMLTALDQLRRTIISDLASLLSAMEYVQKNLTDEELADWKRRQQIACIGGPPNICLDRLENWITSLAESQLQTRQQIRKLEELQQKVSYKGDPIVQHRPMLEERIVELFRNLMKSAFVVERQPCMPMHPDRPLVIKTGVQFTNKVRLLVKFPELNYQLKIKVCIDKDSGEGAALRGSRKFNILGTNTKVMNMEESNNGSLSAEFKHLTLREQRCGNGGRANCDASLIVTEELHLITFETEVYHQGLKIDLETHSLPVVVISNICQMPNAWASILWYNMLTNNPKNVNFFTKPPIGTWDQVAEVLSWQFSSTTKRGLSIEQLTTLAEKLLGPGVNYSGCQITWAKFCKENMAGKGFSFWVWLDNLIDLVKKYMLALWNEGYIIGFISKERERALLSPKPPGTFLLRFSESSKEGGITFTWVEKDISGKTQIQSVEPYTKQQLNSMSFAEIIMGYKIMDATNILVSPLVYLYPDIPKEEAFGKYCRPESQEHQEPTDPGTAPYLRTMFICVTPTTCTLDLPMSPGTFDSVMQFPGEGSESGNGNQFETLTFDVDLPSECAASPM</sequence>
<name>STA32_XENLA</name>
<comment type="function">
    <text evidence="3">Transcription factor that binds to target promoter sequences and activates transcription upon il6st/gp130 stimulation. Mediates ventralization of embryos, at least in part via inhibition of smad2 signaling. Required for hairy2 to induce dll1/delta1 and promote neural crest cell proliferation and differentiation. Involved in TGFbeta-mediated mesoderm induction in early embryos, acting downstream of map3k7/tak1 and nlk.2 (By similarity).</text>
</comment>
<comment type="subunit">
    <text evidence="1">Forms a homodimer or a heterodimer with a related family member. Interacts with nlk.2.</text>
</comment>
<comment type="subcellular location">
    <subcellularLocation>
        <location evidence="2">Cytoplasm</location>
    </subcellularLocation>
    <subcellularLocation>
        <location evidence="2">Nucleus</location>
    </subcellularLocation>
    <text evidence="1">Shuttles between the nucleus and the cytoplasm. Constitutive nuclear presence is independent of tyrosine phosphorylation (By similarity).</text>
</comment>
<comment type="PTM">
    <text evidence="3">Phosphorylation of both tyrosine and serine residues, together with dimerization, is required for mesoderm induction.</text>
</comment>
<comment type="miscellaneous">
    <text evidence="3">Involved in the gp130-mediated signaling pathway.</text>
</comment>
<comment type="similarity">
    <text evidence="4">Belongs to the transcription factor STAT family.</text>
</comment>
<feature type="chain" id="PRO_0000370238" description="Signal transducer and activator of transcription 3.2">
    <location>
        <begin position="1"/>
        <end position="766"/>
    </location>
</feature>
<feature type="domain" description="SH2" evidence="5">
    <location>
        <begin position="580"/>
        <end position="670"/>
    </location>
</feature>
<feature type="short sequence motif" description="Essential for nuclear import" evidence="1">
    <location>
        <begin position="150"/>
        <end position="162"/>
    </location>
</feature>
<feature type="modified residue" description="Phosphoserine; by NLK" evidence="1">
    <location>
        <position position="725"/>
    </location>
</feature>
<proteinExistence type="evidence at transcript level"/>
<keyword id="KW-0010">Activator</keyword>
<keyword id="KW-0963">Cytoplasm</keyword>
<keyword id="KW-0217">Developmental protein</keyword>
<keyword id="KW-0238">DNA-binding</keyword>
<keyword id="KW-0539">Nucleus</keyword>
<keyword id="KW-0597">Phosphoprotein</keyword>
<keyword id="KW-1185">Reference proteome</keyword>
<keyword id="KW-0727">SH2 domain</keyword>
<keyword id="KW-0804">Transcription</keyword>
<keyword id="KW-0805">Transcription regulation</keyword>
<dbReference type="EMBL" id="BC044717">
    <property type="protein sequence ID" value="AAH44717.1"/>
    <property type="molecule type" value="mRNA"/>
</dbReference>
<dbReference type="RefSeq" id="NP_001079577.1">
    <property type="nucleotide sequence ID" value="NM_001086108.1"/>
</dbReference>
<dbReference type="SMR" id="Q7ZXK3"/>
<dbReference type="GeneID" id="379264"/>
<dbReference type="KEGG" id="xla:379264"/>
<dbReference type="AGR" id="Xenbase:XB-GENE-1020979"/>
<dbReference type="CTD" id="379264"/>
<dbReference type="Xenbase" id="XB-GENE-1020979">
    <property type="gene designation" value="stat3.2.L"/>
</dbReference>
<dbReference type="OrthoDB" id="19300at2759"/>
<dbReference type="Proteomes" id="UP000186698">
    <property type="component" value="Chromosome 9_10L"/>
</dbReference>
<dbReference type="Bgee" id="379264">
    <property type="expression patterns" value="Expressed in spleen and 20 other cell types or tissues"/>
</dbReference>
<dbReference type="GO" id="GO:0005737">
    <property type="term" value="C:cytoplasm"/>
    <property type="evidence" value="ECO:0000250"/>
    <property type="project" value="UniProtKB"/>
</dbReference>
<dbReference type="GO" id="GO:0005634">
    <property type="term" value="C:nucleus"/>
    <property type="evidence" value="ECO:0000250"/>
    <property type="project" value="UniProtKB"/>
</dbReference>
<dbReference type="GO" id="GO:0090575">
    <property type="term" value="C:RNA polymerase II transcription regulator complex"/>
    <property type="evidence" value="ECO:0000318"/>
    <property type="project" value="GO_Central"/>
</dbReference>
<dbReference type="GO" id="GO:0003700">
    <property type="term" value="F:DNA-binding transcription factor activity"/>
    <property type="evidence" value="ECO:0000250"/>
    <property type="project" value="UniProtKB"/>
</dbReference>
<dbReference type="GO" id="GO:0000981">
    <property type="term" value="F:DNA-binding transcription factor activity, RNA polymerase II-specific"/>
    <property type="evidence" value="ECO:0000318"/>
    <property type="project" value="GO_Central"/>
</dbReference>
<dbReference type="GO" id="GO:0042803">
    <property type="term" value="F:protein homodimerization activity"/>
    <property type="evidence" value="ECO:0000250"/>
    <property type="project" value="UniProtKB"/>
</dbReference>
<dbReference type="GO" id="GO:0019901">
    <property type="term" value="F:protein kinase binding"/>
    <property type="evidence" value="ECO:0000250"/>
    <property type="project" value="UniProtKB"/>
</dbReference>
<dbReference type="GO" id="GO:0000978">
    <property type="term" value="F:RNA polymerase II cis-regulatory region sequence-specific DNA binding"/>
    <property type="evidence" value="ECO:0000318"/>
    <property type="project" value="GO_Central"/>
</dbReference>
<dbReference type="GO" id="GO:0043565">
    <property type="term" value="F:sequence-specific DNA binding"/>
    <property type="evidence" value="ECO:0000250"/>
    <property type="project" value="UniProtKB"/>
</dbReference>
<dbReference type="GO" id="GO:0007259">
    <property type="term" value="P:cell surface receptor signaling pathway via JAK-STAT"/>
    <property type="evidence" value="ECO:0000318"/>
    <property type="project" value="GO_Central"/>
</dbReference>
<dbReference type="GO" id="GO:0006952">
    <property type="term" value="P:defense response"/>
    <property type="evidence" value="ECO:0000318"/>
    <property type="project" value="GO_Central"/>
</dbReference>
<dbReference type="GO" id="GO:0060397">
    <property type="term" value="P:growth hormone receptor signaling pathway via JAK-STAT"/>
    <property type="evidence" value="ECO:0000318"/>
    <property type="project" value="GO_Central"/>
</dbReference>
<dbReference type="GO" id="GO:0070102">
    <property type="term" value="P:interleukin-6-mediated signaling pathway"/>
    <property type="evidence" value="ECO:0000250"/>
    <property type="project" value="UniProtKB"/>
</dbReference>
<dbReference type="GO" id="GO:0033210">
    <property type="term" value="P:leptin-mediated signaling pathway"/>
    <property type="evidence" value="ECO:0000318"/>
    <property type="project" value="GO_Central"/>
</dbReference>
<dbReference type="GO" id="GO:0001707">
    <property type="term" value="P:mesoderm formation"/>
    <property type="evidence" value="ECO:0000250"/>
    <property type="project" value="UniProtKB"/>
</dbReference>
<dbReference type="GO" id="GO:0014033">
    <property type="term" value="P:neural crest cell differentiation"/>
    <property type="evidence" value="ECO:0000250"/>
    <property type="project" value="UniProtKB"/>
</dbReference>
<dbReference type="GO" id="GO:0045893">
    <property type="term" value="P:positive regulation of DNA-templated transcription"/>
    <property type="evidence" value="ECO:0000250"/>
    <property type="project" value="UniProtKB"/>
</dbReference>
<dbReference type="GO" id="GO:0042127">
    <property type="term" value="P:regulation of cell population proliferation"/>
    <property type="evidence" value="ECO:0000318"/>
    <property type="project" value="GO_Central"/>
</dbReference>
<dbReference type="GO" id="GO:0006357">
    <property type="term" value="P:regulation of transcription by RNA polymerase II"/>
    <property type="evidence" value="ECO:0000318"/>
    <property type="project" value="GO_Central"/>
</dbReference>
<dbReference type="GO" id="GO:0043434">
    <property type="term" value="P:response to peptide hormone"/>
    <property type="evidence" value="ECO:0000318"/>
    <property type="project" value="GO_Central"/>
</dbReference>
<dbReference type="CDD" id="cd10374">
    <property type="entry name" value="SH2_STAT3"/>
    <property type="match status" value="1"/>
</dbReference>
<dbReference type="CDD" id="cd16853">
    <property type="entry name" value="STAT3_CCD"/>
    <property type="match status" value="1"/>
</dbReference>
<dbReference type="CDD" id="cd16847">
    <property type="entry name" value="STAT3_DBD"/>
    <property type="match status" value="1"/>
</dbReference>
<dbReference type="FunFam" id="1.10.238.10:FF:000012">
    <property type="entry name" value="Signal transducer and activator of transcription"/>
    <property type="match status" value="1"/>
</dbReference>
<dbReference type="FunFam" id="1.10.532.10:FF:000001">
    <property type="entry name" value="Signal transducer and activator of transcription"/>
    <property type="match status" value="1"/>
</dbReference>
<dbReference type="FunFam" id="1.20.1050.20:FF:000003">
    <property type="entry name" value="Signal transducer and activator of transcription"/>
    <property type="match status" value="1"/>
</dbReference>
<dbReference type="FunFam" id="3.30.505.10:FF:000003">
    <property type="entry name" value="Signal transducer and activator of transcription"/>
    <property type="match status" value="1"/>
</dbReference>
<dbReference type="FunFam" id="2.60.40.630:FF:000012">
    <property type="entry name" value="Signal transducer and activator of transcription 3"/>
    <property type="match status" value="1"/>
</dbReference>
<dbReference type="Gene3D" id="1.10.238.10">
    <property type="entry name" value="EF-hand"/>
    <property type="match status" value="1"/>
</dbReference>
<dbReference type="Gene3D" id="3.30.505.10">
    <property type="entry name" value="SH2 domain"/>
    <property type="match status" value="1"/>
</dbReference>
<dbReference type="Gene3D" id="1.20.1050.20">
    <property type="entry name" value="STAT transcription factor, all-alpha domain"/>
    <property type="match status" value="1"/>
</dbReference>
<dbReference type="Gene3D" id="2.60.40.630">
    <property type="entry name" value="STAT transcription factor, DNA-binding domain"/>
    <property type="match status" value="1"/>
</dbReference>
<dbReference type="Gene3D" id="1.10.532.10">
    <property type="entry name" value="STAT transcription factor, N-terminal domain"/>
    <property type="match status" value="1"/>
</dbReference>
<dbReference type="InterPro" id="IPR008967">
    <property type="entry name" value="p53-like_TF_DNA-bd_sf"/>
</dbReference>
<dbReference type="InterPro" id="IPR000980">
    <property type="entry name" value="SH2"/>
</dbReference>
<dbReference type="InterPro" id="IPR036860">
    <property type="entry name" value="SH2_dom_sf"/>
</dbReference>
<dbReference type="InterPro" id="IPR001217">
    <property type="entry name" value="STAT"/>
</dbReference>
<dbReference type="InterPro" id="IPR035855">
    <property type="entry name" value="STAT3_SH2"/>
</dbReference>
<dbReference type="InterPro" id="IPR048988">
    <property type="entry name" value="STAT_linker"/>
</dbReference>
<dbReference type="InterPro" id="IPR036535">
    <property type="entry name" value="STAT_N_sf"/>
</dbReference>
<dbReference type="InterPro" id="IPR013800">
    <property type="entry name" value="STAT_TF_alpha"/>
</dbReference>
<dbReference type="InterPro" id="IPR015988">
    <property type="entry name" value="STAT_TF_coiled-coil"/>
</dbReference>
<dbReference type="InterPro" id="IPR013801">
    <property type="entry name" value="STAT_TF_DNA-bd"/>
</dbReference>
<dbReference type="InterPro" id="IPR012345">
    <property type="entry name" value="STAT_TF_DNA-bd_N"/>
</dbReference>
<dbReference type="InterPro" id="IPR013799">
    <property type="entry name" value="STAT_TF_prot_interaction"/>
</dbReference>
<dbReference type="PANTHER" id="PTHR11801">
    <property type="entry name" value="SIGNAL TRANSDUCER AND ACTIVATOR OF TRANSCRIPTION"/>
    <property type="match status" value="1"/>
</dbReference>
<dbReference type="Pfam" id="PF00017">
    <property type="entry name" value="SH2"/>
    <property type="match status" value="1"/>
</dbReference>
<dbReference type="Pfam" id="PF01017">
    <property type="entry name" value="STAT_alpha"/>
    <property type="match status" value="1"/>
</dbReference>
<dbReference type="Pfam" id="PF02864">
    <property type="entry name" value="STAT_bind"/>
    <property type="match status" value="1"/>
</dbReference>
<dbReference type="Pfam" id="PF02865">
    <property type="entry name" value="STAT_int"/>
    <property type="match status" value="1"/>
</dbReference>
<dbReference type="Pfam" id="PF21354">
    <property type="entry name" value="STAT_linker"/>
    <property type="match status" value="1"/>
</dbReference>
<dbReference type="SMART" id="SM00964">
    <property type="entry name" value="STAT_int"/>
    <property type="match status" value="1"/>
</dbReference>
<dbReference type="SUPFAM" id="SSF49417">
    <property type="entry name" value="p53-like transcription factors"/>
    <property type="match status" value="1"/>
</dbReference>
<dbReference type="SUPFAM" id="SSF55550">
    <property type="entry name" value="SH2 domain"/>
    <property type="match status" value="1"/>
</dbReference>
<dbReference type="SUPFAM" id="SSF47655">
    <property type="entry name" value="STAT"/>
    <property type="match status" value="1"/>
</dbReference>
<dbReference type="SUPFAM" id="SSF48092">
    <property type="entry name" value="Transcription factor STAT-4 N-domain"/>
    <property type="match status" value="1"/>
</dbReference>
<dbReference type="PROSITE" id="PS50001">
    <property type="entry name" value="SH2"/>
    <property type="match status" value="1"/>
</dbReference>